<protein>
    <recommendedName>
        <fullName evidence="4">Osmoprotective compounds-binding protein GgtB</fullName>
    </recommendedName>
</protein>
<proteinExistence type="evidence at protein level"/>
<feature type="signal peptide" evidence="1">
    <location>
        <begin position="1"/>
        <end position="18"/>
    </location>
</feature>
<feature type="chain" id="PRO_0000449362" description="Osmoprotective compounds-binding protein GgtB" evidence="1">
    <location>
        <begin position="19"/>
        <end position="421"/>
    </location>
</feature>
<feature type="lipid moiety-binding region" description="N-palmitoyl cysteine" evidence="1">
    <location>
        <position position="19"/>
    </location>
</feature>
<feature type="lipid moiety-binding region" description="S-diacylglycerol cysteine" evidence="1">
    <location>
        <position position="19"/>
    </location>
</feature>
<organism>
    <name type="scientific">Synechocystis sp. (strain ATCC 27184 / PCC 6803 / Kazusa)</name>
    <dbReference type="NCBI Taxonomy" id="1111708"/>
    <lineage>
        <taxon>Bacteria</taxon>
        <taxon>Bacillati</taxon>
        <taxon>Cyanobacteriota</taxon>
        <taxon>Cyanophyceae</taxon>
        <taxon>Synechococcales</taxon>
        <taxon>Merismopediaceae</taxon>
        <taxon>Synechocystis</taxon>
    </lineage>
</organism>
<gene>
    <name evidence="3" type="primary">ggtB</name>
    <name evidence="6" type="ordered locus">slr0529</name>
</gene>
<reference key="1">
    <citation type="journal article" date="1996" name="DNA Res.">
        <title>Sequence analysis of the genome of the unicellular cyanobacterium Synechocystis sp. strain PCC6803. II. Sequence determination of the entire genome and assignment of potential protein-coding regions.</title>
        <authorList>
            <person name="Kaneko T."/>
            <person name="Sato S."/>
            <person name="Kotani H."/>
            <person name="Tanaka A."/>
            <person name="Asamizu E."/>
            <person name="Nakamura Y."/>
            <person name="Miyajima N."/>
            <person name="Hirosawa M."/>
            <person name="Sugiura M."/>
            <person name="Sasamoto S."/>
            <person name="Kimura T."/>
            <person name="Hosouchi T."/>
            <person name="Matsuno A."/>
            <person name="Muraki A."/>
            <person name="Nakazaki N."/>
            <person name="Naruo K."/>
            <person name="Okumura S."/>
            <person name="Shimpo S."/>
            <person name="Takeuchi C."/>
            <person name="Wada T."/>
            <person name="Watanabe A."/>
            <person name="Yamada M."/>
            <person name="Yasuda M."/>
            <person name="Tabata S."/>
        </authorList>
    </citation>
    <scope>NUCLEOTIDE SEQUENCE [LARGE SCALE GENOMIC DNA]</scope>
    <source>
        <strain>ATCC 27184 / PCC 6803 / Kazusa</strain>
    </source>
</reference>
<reference key="2">
    <citation type="journal article" date="2000" name="Arch. Microbiol.">
        <title>Molecular analysis of the ggtBCD gene cluster of Synechocystis sp. strain PCC6803 encoding subunits of an ABC transporter for osmoprotective compounds.</title>
        <authorList>
            <person name="Mikkat S."/>
            <person name="Hagemann M."/>
        </authorList>
    </citation>
    <scope>FUNCTION</scope>
    <scope>SUBUNIT</scope>
    <scope>INDUCTION</scope>
    <scope>DISRUPTION PHENOTYPE</scope>
</reference>
<keyword id="KW-1003">Cell membrane</keyword>
<keyword id="KW-0449">Lipoprotein</keyword>
<keyword id="KW-0472">Membrane</keyword>
<keyword id="KW-0564">Palmitate</keyword>
<keyword id="KW-1185">Reference proteome</keyword>
<keyword id="KW-0732">Signal</keyword>
<keyword id="KW-0762">Sugar transport</keyword>
<keyword id="KW-0813">Transport</keyword>
<dbReference type="EMBL" id="BA000022">
    <property type="protein sequence ID" value="BAA10817.1"/>
    <property type="molecule type" value="Genomic_DNA"/>
</dbReference>
<dbReference type="PIR" id="S75970">
    <property type="entry name" value="S75970"/>
</dbReference>
<dbReference type="SMR" id="Q55471"/>
<dbReference type="IntAct" id="Q55471">
    <property type="interactions" value="1"/>
</dbReference>
<dbReference type="STRING" id="1148.gene:10500321"/>
<dbReference type="TCDB" id="3.A.1.1.32">
    <property type="family name" value="the atp-binding cassette (abc) superfamily"/>
</dbReference>
<dbReference type="PaxDb" id="1148-1001330"/>
<dbReference type="EnsemblBacteria" id="BAA10817">
    <property type="protein sequence ID" value="BAA10817"/>
    <property type="gene ID" value="BAA10817"/>
</dbReference>
<dbReference type="KEGG" id="syn:slr0529"/>
<dbReference type="eggNOG" id="COG1653">
    <property type="taxonomic scope" value="Bacteria"/>
</dbReference>
<dbReference type="InParanoid" id="Q55471"/>
<dbReference type="PhylomeDB" id="Q55471"/>
<dbReference type="Proteomes" id="UP000001425">
    <property type="component" value="Chromosome"/>
</dbReference>
<dbReference type="GO" id="GO:0005886">
    <property type="term" value="C:plasma membrane"/>
    <property type="evidence" value="ECO:0007669"/>
    <property type="project" value="UniProtKB-SubCell"/>
</dbReference>
<dbReference type="Gene3D" id="3.40.190.10">
    <property type="entry name" value="Periplasmic binding protein-like II"/>
    <property type="match status" value="2"/>
</dbReference>
<dbReference type="InterPro" id="IPR050490">
    <property type="entry name" value="Bact_solute-bd_prot1"/>
</dbReference>
<dbReference type="InterPro" id="IPR006059">
    <property type="entry name" value="SBP"/>
</dbReference>
<dbReference type="PANTHER" id="PTHR43649">
    <property type="entry name" value="ARABINOSE-BINDING PROTEIN-RELATED"/>
    <property type="match status" value="1"/>
</dbReference>
<dbReference type="PANTHER" id="PTHR43649:SF29">
    <property type="entry name" value="OSMOPROTECTIVE COMPOUNDS-BINDING PROTEIN GGTB"/>
    <property type="match status" value="1"/>
</dbReference>
<dbReference type="Pfam" id="PF01547">
    <property type="entry name" value="SBP_bac_1"/>
    <property type="match status" value="1"/>
</dbReference>
<dbReference type="SUPFAM" id="SSF53850">
    <property type="entry name" value="Periplasmic binding protein-like II"/>
    <property type="match status" value="1"/>
</dbReference>
<dbReference type="PROSITE" id="PS51257">
    <property type="entry name" value="PROKAR_LIPOPROTEIN"/>
    <property type="match status" value="1"/>
</dbReference>
<comment type="function">
    <text evidence="2">Part of the ABC transporter complex GgtABCD involved in the uptake of the osmoprotective compounds glucosylglycerol (GG), sucrose and trehalose. Binds glucosylglycerol and exhibits a somewhat lower affinity towards sucrose and a substantially lower affinity towards trehalose.</text>
</comment>
<comment type="subunit">
    <text evidence="5">The complex is composed of two ATP-binding proteins (GgtA), two transmembrane proteins (GgtC and GgtD) and a solute-binding protein (GgtB).</text>
</comment>
<comment type="subcellular location">
    <subcellularLocation>
        <location evidence="1">Cell membrane</location>
        <topology evidence="1">Lipid-anchor</topology>
    </subcellularLocation>
</comment>
<comment type="induction">
    <text evidence="2">Expression is very low in cells grown in basal medium but increases significantly after a salt shock.</text>
</comment>
<comment type="disruption phenotype">
    <text evidence="2">Inactivation of the gene results in loss of the ability to take up glucosylglycerol and sucrose, as well as to accumulate exogenous trehalose. Insertion causes leakage of glucosylglycerol from the cells into the medium.</text>
</comment>
<comment type="similarity">
    <text evidence="4">Belongs to the bacterial solute-binding protein 1 family.</text>
</comment>
<evidence type="ECO:0000255" key="1">
    <source>
        <dbReference type="PROSITE-ProRule" id="PRU00303"/>
    </source>
</evidence>
<evidence type="ECO:0000269" key="2">
    <source>
    </source>
</evidence>
<evidence type="ECO:0000303" key="3">
    <source>
    </source>
</evidence>
<evidence type="ECO:0000305" key="4"/>
<evidence type="ECO:0000305" key="5">
    <source>
    </source>
</evidence>
<evidence type="ECO:0000312" key="6">
    <source>
        <dbReference type="EMBL" id="BAA10817.1"/>
    </source>
</evidence>
<sequence length="421" mass="46473">MKFFKITTLIISLIVLTSCQGPGVNGDEDRKQVTILGVMIGEQQEKIEQALAPFTEATGIEVVYEGVDTFATTLPIRVDSGRAPDLAMFPQPGLMADFAREGKLVPLGEILTPEEMTEAYDQAWLDLAAVDGTVYGVWYRASVKSLVWFNPQEFAANGYEVPGTWEEMMALSQRLIDKGKTPWCLGIESGNATGWVGTDWVEDIMLRTASPATYDQWVAHDIPFNDRRVENALDIFGEITQNEKMIYGGKVGALSTPFGDSILGLFTDPPHCYLHRQGNFIAAFLPADVDDDQVDIFPLPPIEEEYGLPILVAGDIFAMFNDTPEARQLMAYLASSRPHEVAATLGAYISPHKNIDLNLYPDRLTRKQAEILNKAEVIRFDASDMMPGAVGTGTFWSGMVDYIGGADGTQVLNTIERSWPR</sequence>
<name>GGTB_SYNY3</name>
<accession>Q55471</accession>